<reference key="1">
    <citation type="journal article" date="2008" name="Genome Biol.">
        <title>Encapsulated in silica: genome, proteome and physiology of the thermophilic bacterium Anoxybacillus flavithermus WK1.</title>
        <authorList>
            <person name="Saw J.H."/>
            <person name="Mountain B.W."/>
            <person name="Feng L."/>
            <person name="Omelchenko M.V."/>
            <person name="Hou S."/>
            <person name="Saito J.A."/>
            <person name="Stott M.B."/>
            <person name="Li D."/>
            <person name="Zhao G."/>
            <person name="Wu J."/>
            <person name="Galperin M.Y."/>
            <person name="Koonin E.V."/>
            <person name="Makarova K.S."/>
            <person name="Wolf Y.I."/>
            <person name="Rigden D.J."/>
            <person name="Dunfield P.F."/>
            <person name="Wang L."/>
            <person name="Alam M."/>
        </authorList>
    </citation>
    <scope>NUCLEOTIDE SEQUENCE [LARGE SCALE GENOMIC DNA]</scope>
    <source>
        <strain>DSM 21510 / WK1</strain>
    </source>
</reference>
<evidence type="ECO:0000255" key="1">
    <source>
        <dbReference type="HAMAP-Rule" id="MF_01863"/>
    </source>
</evidence>
<evidence type="ECO:0000305" key="2"/>
<gene>
    <name type="ordered locus">Aflv_2757</name>
</gene>
<feature type="chain" id="PRO_0000372723" description="UPF0741 protein Aflv_2757">
    <location>
        <begin position="1"/>
        <end position="74"/>
    </location>
</feature>
<organism>
    <name type="scientific">Anoxybacillus flavithermus (strain DSM 21510 / WK1)</name>
    <dbReference type="NCBI Taxonomy" id="491915"/>
    <lineage>
        <taxon>Bacteria</taxon>
        <taxon>Bacillati</taxon>
        <taxon>Bacillota</taxon>
        <taxon>Bacilli</taxon>
        <taxon>Bacillales</taxon>
        <taxon>Anoxybacillaceae</taxon>
        <taxon>Anoxybacillus</taxon>
    </lineage>
</organism>
<dbReference type="EMBL" id="CP000922">
    <property type="protein sequence ID" value="ACJ35110.1"/>
    <property type="status" value="ALT_INIT"/>
    <property type="molecule type" value="Genomic_DNA"/>
</dbReference>
<dbReference type="RefSeq" id="WP_003397078.1">
    <property type="nucleotide sequence ID" value="NC_011567.1"/>
</dbReference>
<dbReference type="SMR" id="B7GMK8"/>
<dbReference type="STRING" id="491915.Aflv_2757"/>
<dbReference type="KEGG" id="afl:Aflv_2757"/>
<dbReference type="eggNOG" id="COG4844">
    <property type="taxonomic scope" value="Bacteria"/>
</dbReference>
<dbReference type="HOGENOM" id="CLU_163820_0_0_9"/>
<dbReference type="Proteomes" id="UP000000742">
    <property type="component" value="Chromosome"/>
</dbReference>
<dbReference type="HAMAP" id="MF_01863">
    <property type="entry name" value="UPF0741"/>
    <property type="match status" value="1"/>
</dbReference>
<dbReference type="InterPro" id="IPR009910">
    <property type="entry name" value="DUF1450"/>
</dbReference>
<dbReference type="InterPro" id="IPR020880">
    <property type="entry name" value="UPF0741"/>
</dbReference>
<dbReference type="Pfam" id="PF07293">
    <property type="entry name" value="DUF1450"/>
    <property type="match status" value="1"/>
</dbReference>
<proteinExistence type="inferred from homology"/>
<accession>B7GMK8</accession>
<protein>
    <recommendedName>
        <fullName evidence="1">UPF0741 protein Aflv_2757</fullName>
    </recommendedName>
</protein>
<sequence>MQNEFRVCDDCQATNLKTLLPRLKKLDPNATIEIGCQSYCGPGRKKVFAFVNNRPVSAMTEDELIEKIAAKLKK</sequence>
<comment type="similarity">
    <text evidence="1">Belongs to the UPF0741 family.</text>
</comment>
<comment type="sequence caution" evidence="2">
    <conflict type="erroneous initiation">
        <sequence resource="EMBL-CDS" id="ACJ35110"/>
    </conflict>
</comment>
<name>Y2757_ANOFW</name>